<dbReference type="EC" id="3.6.1.8"/>
<dbReference type="EMBL" id="AL123456">
    <property type="protein sequence ID" value="CCP43771.1"/>
    <property type="molecule type" value="Genomic_DNA"/>
</dbReference>
<dbReference type="PIR" id="H70622">
    <property type="entry name" value="H70622"/>
</dbReference>
<dbReference type="RefSeq" id="NP_215537.1">
    <property type="nucleotide sequence ID" value="NC_000962.3"/>
</dbReference>
<dbReference type="RefSeq" id="WP_003405276.1">
    <property type="nucleotide sequence ID" value="NZ_NVQJ01000018.1"/>
</dbReference>
<dbReference type="PDB" id="7YH5">
    <property type="method" value="X-ray"/>
    <property type="resolution" value="2.70 A"/>
    <property type="chains" value="A/B/C/D/E/F=1-185"/>
</dbReference>
<dbReference type="PDBsum" id="7YH5"/>
<dbReference type="SASBDB" id="P96379"/>
<dbReference type="SMR" id="P96379"/>
<dbReference type="FunCoup" id="P96379">
    <property type="interactions" value="36"/>
</dbReference>
<dbReference type="STRING" id="83332.Rv1021"/>
<dbReference type="PaxDb" id="83332-Rv1021"/>
<dbReference type="DNASU" id="886052"/>
<dbReference type="GeneID" id="886052"/>
<dbReference type="KEGG" id="mtu:Rv1021"/>
<dbReference type="KEGG" id="mtv:RVBD_1021"/>
<dbReference type="TubercuList" id="Rv1021"/>
<dbReference type="eggNOG" id="COG3956">
    <property type="taxonomic scope" value="Bacteria"/>
</dbReference>
<dbReference type="InParanoid" id="P96379"/>
<dbReference type="OrthoDB" id="9808939at2"/>
<dbReference type="PhylomeDB" id="P96379"/>
<dbReference type="SABIO-RK" id="P96379"/>
<dbReference type="Proteomes" id="UP000001584">
    <property type="component" value="Chromosome"/>
</dbReference>
<dbReference type="GO" id="GO:0009274">
    <property type="term" value="C:peptidoglycan-based cell wall"/>
    <property type="evidence" value="ECO:0007005"/>
    <property type="project" value="MTBBASE"/>
</dbReference>
<dbReference type="GO" id="GO:0035539">
    <property type="term" value="F:8-oxo-7,8-dihydrodeoxyguanosine triphosphate pyrophosphatase activity"/>
    <property type="evidence" value="ECO:0000314"/>
    <property type="project" value="MTBBASE"/>
</dbReference>
<dbReference type="GO" id="GO:0005524">
    <property type="term" value="F:ATP binding"/>
    <property type="evidence" value="ECO:0007669"/>
    <property type="project" value="UniProtKB-KW"/>
</dbReference>
<dbReference type="GO" id="GO:0047693">
    <property type="term" value="F:ATP diphosphatase activity"/>
    <property type="evidence" value="ECO:0000314"/>
    <property type="project" value="MTBBASE"/>
</dbReference>
<dbReference type="GO" id="GO:0000287">
    <property type="term" value="F:magnesium ion binding"/>
    <property type="evidence" value="ECO:0000314"/>
    <property type="project" value="MTBBASE"/>
</dbReference>
<dbReference type="GO" id="GO:0047429">
    <property type="term" value="F:nucleoside triphosphate diphosphatase activity"/>
    <property type="evidence" value="ECO:0000318"/>
    <property type="project" value="GO_Central"/>
</dbReference>
<dbReference type="GO" id="GO:0046061">
    <property type="term" value="P:dATP catabolic process"/>
    <property type="evidence" value="ECO:0000314"/>
    <property type="project" value="MTBBASE"/>
</dbReference>
<dbReference type="GO" id="GO:0006203">
    <property type="term" value="P:dGTP catabolic process"/>
    <property type="evidence" value="ECO:0000314"/>
    <property type="project" value="MTBBASE"/>
</dbReference>
<dbReference type="GO" id="GO:0046076">
    <property type="term" value="P:dTTP catabolic process"/>
    <property type="evidence" value="ECO:0000314"/>
    <property type="project" value="MTBBASE"/>
</dbReference>
<dbReference type="GO" id="GO:0046081">
    <property type="term" value="P:dUTP catabolic process"/>
    <property type="evidence" value="ECO:0000314"/>
    <property type="project" value="MTBBASE"/>
</dbReference>
<dbReference type="GO" id="GO:0051289">
    <property type="term" value="P:protein homotetramerization"/>
    <property type="evidence" value="ECO:0000353"/>
    <property type="project" value="MTBBASE"/>
</dbReference>
<dbReference type="GO" id="GO:0006979">
    <property type="term" value="P:response to oxidative stress"/>
    <property type="evidence" value="ECO:0000314"/>
    <property type="project" value="MTBBASE"/>
</dbReference>
<dbReference type="GO" id="GO:0046047">
    <property type="term" value="P:TTP catabolic process"/>
    <property type="evidence" value="ECO:0000314"/>
    <property type="project" value="MTBBASE"/>
</dbReference>
<dbReference type="GO" id="GO:0046052">
    <property type="term" value="P:UTP catabolic process"/>
    <property type="evidence" value="ECO:0000314"/>
    <property type="project" value="MTBBASE"/>
</dbReference>
<dbReference type="CDD" id="cd11528">
    <property type="entry name" value="NTP-PPase_MazG_Nterm"/>
    <property type="match status" value="1"/>
</dbReference>
<dbReference type="FunFam" id="1.10.287.1080:FF:000001">
    <property type="entry name" value="Nucleoside triphosphate pyrophosphohydrolase"/>
    <property type="match status" value="1"/>
</dbReference>
<dbReference type="Gene3D" id="1.10.287.1080">
    <property type="entry name" value="MazG-like"/>
    <property type="match status" value="1"/>
</dbReference>
<dbReference type="InterPro" id="IPR004518">
    <property type="entry name" value="MazG-like_dom"/>
</dbReference>
<dbReference type="InterPro" id="IPR048015">
    <property type="entry name" value="NTP-PPase_MazG-like_N"/>
</dbReference>
<dbReference type="InterPro" id="IPR011551">
    <property type="entry name" value="NTP_PyrPHydrolase_MazG"/>
</dbReference>
<dbReference type="NCBIfam" id="NF008987">
    <property type="entry name" value="PRK12334.1-1"/>
    <property type="match status" value="1"/>
</dbReference>
<dbReference type="PANTHER" id="PTHR30522">
    <property type="entry name" value="NUCLEOSIDE TRIPHOSPHATE PYROPHOSPHOHYDROLASE"/>
    <property type="match status" value="1"/>
</dbReference>
<dbReference type="PANTHER" id="PTHR30522:SF0">
    <property type="entry name" value="NUCLEOSIDE TRIPHOSPHATE PYROPHOSPHOHYDROLASE"/>
    <property type="match status" value="1"/>
</dbReference>
<dbReference type="Pfam" id="PF03819">
    <property type="entry name" value="MazG"/>
    <property type="match status" value="1"/>
</dbReference>
<dbReference type="SUPFAM" id="SSF101386">
    <property type="entry name" value="all-alpha NTP pyrophosphatases"/>
    <property type="match status" value="1"/>
</dbReference>
<proteinExistence type="evidence at protein level"/>
<organism>
    <name type="scientific">Mycobacterium tuberculosis (strain ATCC 25618 / H37Rv)</name>
    <dbReference type="NCBI Taxonomy" id="83332"/>
    <lineage>
        <taxon>Bacteria</taxon>
        <taxon>Bacillati</taxon>
        <taxon>Actinomycetota</taxon>
        <taxon>Actinomycetes</taxon>
        <taxon>Mycobacteriales</taxon>
        <taxon>Mycobacteriaceae</taxon>
        <taxon>Mycobacterium</taxon>
        <taxon>Mycobacterium tuberculosis complex</taxon>
    </lineage>
</organism>
<gene>
    <name type="primary">mazG</name>
    <name type="ordered locus">Rv1021</name>
</gene>
<name>MAZG_MYCTU</name>
<sequence length="325" mass="35413">MIVVLVDPRRPTLVPVEAIEFLRGEVQYTEEMPVAVPWSLPAARSAHAGNDAPVLLSSDPNHPAVITRLAAGARLISAPDSQRGERLVDAVAMMDKLRTAGPWESEQTHDSLRRYLLEETYELLDAVRSGSVDQLREELGDLLLQVLFHARIAEDASQSPFTIDDVADTLMRKLGNRAPGVLAGESISLEDQLAQWEAAKASEKARKSVADDVHTGQPALALAQKVIQRAQKAGLPAHLIPDEITSVSVSADVDAENTLRTAVLDFIDRLRCAERAIAVARRGSNVAEQLDVTPLGVITEQEWLAHWPTAVNDSRGGSKKRKGMR</sequence>
<evidence type="ECO:0000269" key="1">
    <source>
    </source>
</evidence>
<evidence type="ECO:0000305" key="2"/>
<evidence type="ECO:0007829" key="3">
    <source>
        <dbReference type="PDB" id="7YH5"/>
    </source>
</evidence>
<keyword id="KW-0002">3D-structure</keyword>
<keyword id="KW-0067">ATP-binding</keyword>
<keyword id="KW-0378">Hydrolase</keyword>
<keyword id="KW-0460">Magnesium</keyword>
<keyword id="KW-0479">Metal-binding</keyword>
<keyword id="KW-0547">Nucleotide-binding</keyword>
<keyword id="KW-1185">Reference proteome</keyword>
<feature type="chain" id="PRO_0000401206" description="Nucleoside triphosphate pyrophosphohydrolase">
    <location>
        <begin position="1"/>
        <end position="325"/>
    </location>
</feature>
<feature type="short sequence motif" description="Important for catalytic activity">
    <location>
        <position position="219"/>
    </location>
</feature>
<feature type="mutagenesis site" description="Pyrophosphohydrolase activity is reduced 20-fold. It affects the magnesium binding and the protein structure." evidence="1">
    <original>A</original>
    <variation>E</variation>
    <location>
        <position position="219"/>
    </location>
</feature>
<feature type="strand" evidence="3">
    <location>
        <begin position="2"/>
        <end position="5"/>
    </location>
</feature>
<feature type="strand" evidence="3">
    <location>
        <begin position="13"/>
        <end position="15"/>
    </location>
</feature>
<feature type="helix" evidence="3">
    <location>
        <begin position="16"/>
        <end position="21"/>
    </location>
</feature>
<feature type="strand" evidence="3">
    <location>
        <begin position="22"/>
        <end position="24"/>
    </location>
</feature>
<feature type="strand" evidence="3">
    <location>
        <begin position="26"/>
        <end position="28"/>
    </location>
</feature>
<feature type="helix" evidence="3">
    <location>
        <begin position="35"/>
        <end position="39"/>
    </location>
</feature>
<feature type="strand" evidence="3">
    <location>
        <begin position="48"/>
        <end position="50"/>
    </location>
</feature>
<feature type="strand" evidence="3">
    <location>
        <begin position="53"/>
        <end position="58"/>
    </location>
</feature>
<feature type="helix" evidence="3">
    <location>
        <begin position="63"/>
        <end position="70"/>
    </location>
</feature>
<feature type="strand" evidence="3">
    <location>
        <begin position="74"/>
        <end position="77"/>
    </location>
</feature>
<feature type="helix" evidence="3">
    <location>
        <begin position="85"/>
        <end position="100"/>
    </location>
</feature>
<feature type="helix" evidence="3">
    <location>
        <begin position="102"/>
        <end position="106"/>
    </location>
</feature>
<feature type="helix" evidence="3">
    <location>
        <begin position="109"/>
        <end position="127"/>
    </location>
</feature>
<feature type="helix" evidence="3">
    <location>
        <begin position="132"/>
        <end position="154"/>
    </location>
</feature>
<feature type="strand" evidence="3">
    <location>
        <begin position="157"/>
        <end position="159"/>
    </location>
</feature>
<feature type="helix" evidence="3">
    <location>
        <begin position="163"/>
        <end position="175"/>
    </location>
</feature>
<comment type="function">
    <text evidence="1">Required to maintain the full capacity of the mycobacterium to respond to oxidative stress via the degradation of oxidation-induced damaged nucleotides. Hydrolyzes all canonical (d)NTPs, as well as mutagenic dUTP and 8-oxo-7,8-dihydro-2'-deoxyguanosine 5'-triphosphate (8-oxo-dGTP). Also involved in the transcriptional activation of RelA in response to oxidative stress.</text>
</comment>
<comment type="catalytic activity">
    <reaction evidence="1">
        <text>ATP + H2O = AMP + diphosphate + H(+)</text>
        <dbReference type="Rhea" id="RHEA:14245"/>
        <dbReference type="ChEBI" id="CHEBI:15377"/>
        <dbReference type="ChEBI" id="CHEBI:15378"/>
        <dbReference type="ChEBI" id="CHEBI:30616"/>
        <dbReference type="ChEBI" id="CHEBI:33019"/>
        <dbReference type="ChEBI" id="CHEBI:456215"/>
        <dbReference type="EC" id="3.6.1.8"/>
    </reaction>
</comment>
<comment type="cofactor">
    <cofactor>
        <name>Mg(2+)</name>
        <dbReference type="ChEBI" id="CHEBI:18420"/>
    </cofactor>
</comment>
<comment type="biophysicochemical properties">
    <kinetics>
        <KM evidence="1">0.11 mM for 8-oxo-dGTP (at pH 9.6 and at 37 degrees Celsius in the presence of 5 mM magnesium)</KM>
        <KM evidence="1">0.4 mM for GTP (at pH 9.6 and at 37 degrees Celsius in the presence of 5 mM magnesium)</KM>
        <KM evidence="1">0.4 mM for dGTP (at pH 9.6 and at 37 degrees Celsius in the presence of 5 mM magnesium)</KM>
        <KM evidence="1">0.6 mM for UTP (at pH 9.6 and at 37 degrees Celsius in the presence of 5 mM magnesium)</KM>
        <KM evidence="1">0.6 mM for GTP (at pH 9.6 and at 37 degrees Celsius in the presence of 20 mM magnesium)</KM>
        <KM evidence="1">1.1 mM for dUTP (at pH 9.6 and at 37 degrees Celsius in the presence of 5 mM magnesium)</KM>
        <KM evidence="1">1.2 mM for dATP (at pH 9.6 and at 37 degrees Celsius in the presence of 5 mM magnesium)</KM>
        <KM evidence="1">1.3 mM for dTTP (at pH 9.6 and at 37 degrees Celsius in the presence of 5 mM magnesium)</KM>
        <KM evidence="1">1.6 mM for ATP (at pH 9.6 and at 37 degrees Celsius in the presence of 5 mM magnesium)</KM>
        <Vmax evidence="1">0.14 nmol/min/ug enzyme for 8-oxo-dGTP (at pH 9.6 and at 37 degrees Celsius in the presence of 5 mM magnesium)</Vmax>
        <Vmax evidence="1">0.5 nmol/min/ug enzyme for UTP (at pH 9.6 and at 37 degrees Celsius in the presence of 5 mM magnesium)</Vmax>
        <Vmax evidence="1">1.2 nmol/min/ug enzyme for dUTP (at pH 9.6 and at 37 degrees Celsius in the presence of 5 mM magnesium)</Vmax>
        <Vmax evidence="1">1.3 nmol/min/ug enzyme for ATP (at pH 9.6 and at 37 degrees Celsius in the presence of 5 mM magnesium)</Vmax>
        <Vmax evidence="1">1.4 nmol/min/ug enzyme for dGTP (at pH 9.6 and at 37 degrees Celsius in the presence of 5 mM magnesium)</Vmax>
        <Vmax evidence="1">1.5 nmol/min/ug enzyme for GTP (at pH 9.6 and at 37 degrees Celsius in the presence of 5 mM magnesium)</Vmax>
        <Vmax evidence="1">1.6 nmol/min/ug enzyme for dTTP (at pH 9.6 and at 37 degrees Celsius in the presence of 5 mM magnesium)</Vmax>
        <Vmax evidence="1">1.7 nmol/min/ug enzyme for dATP (at pH 9.6 and at 37 degrees Celsius in the presence of 5 mM magnesium)</Vmax>
        <Vmax evidence="1">2.3 nmol/min/ug enzyme for GTP (at pH 9.6 and at 37 degrees Celsius in the presence of 20 mM magnesium)</Vmax>
    </kinetics>
    <phDependence>
        <text evidence="1">Optimum pH is 9.6.</text>
    </phDependence>
    <temperatureDependence>
        <text evidence="1">Optimum temperature is 37 degrees Celsius. The activity is abolished at 70 degrees Celsius.</text>
    </temperatureDependence>
</comment>
<comment type="subunit">
    <text evidence="1">Homotetramer.</text>
</comment>
<comment type="induction">
    <text evidence="1">By oxidative stress.</text>
</comment>
<comment type="similarity">
    <text evidence="2">Belongs to the nucleoside triphosphate pyrophosphohydrolase family.</text>
</comment>
<accession>P96379</accession>
<accession>L0T5L3</accession>
<reference key="1">
    <citation type="journal article" date="1998" name="Nature">
        <title>Deciphering the biology of Mycobacterium tuberculosis from the complete genome sequence.</title>
        <authorList>
            <person name="Cole S.T."/>
            <person name="Brosch R."/>
            <person name="Parkhill J."/>
            <person name="Garnier T."/>
            <person name="Churcher C.M."/>
            <person name="Harris D.E."/>
            <person name="Gordon S.V."/>
            <person name="Eiglmeier K."/>
            <person name="Gas S."/>
            <person name="Barry C.E. III"/>
            <person name="Tekaia F."/>
            <person name="Badcock K."/>
            <person name="Basham D."/>
            <person name="Brown D."/>
            <person name="Chillingworth T."/>
            <person name="Connor R."/>
            <person name="Davies R.M."/>
            <person name="Devlin K."/>
            <person name="Feltwell T."/>
            <person name="Gentles S."/>
            <person name="Hamlin N."/>
            <person name="Holroyd S."/>
            <person name="Hornsby T."/>
            <person name="Jagels K."/>
            <person name="Krogh A."/>
            <person name="McLean J."/>
            <person name="Moule S."/>
            <person name="Murphy L.D."/>
            <person name="Oliver S."/>
            <person name="Osborne J."/>
            <person name="Quail M.A."/>
            <person name="Rajandream M.A."/>
            <person name="Rogers J."/>
            <person name="Rutter S."/>
            <person name="Seeger K."/>
            <person name="Skelton S."/>
            <person name="Squares S."/>
            <person name="Squares R."/>
            <person name="Sulston J.E."/>
            <person name="Taylor K."/>
            <person name="Whitehead S."/>
            <person name="Barrell B.G."/>
        </authorList>
    </citation>
    <scope>NUCLEOTIDE SEQUENCE [LARGE SCALE GENOMIC DNA]</scope>
    <source>
        <strain>ATCC 25618 / H37Rv</strain>
    </source>
</reference>
<reference key="2">
    <citation type="journal article" date="2010" name="J. Biol. Chem.">
        <title>Mycobacterial MazG is a novel NTP pyrophosphohydrolase involved in oxidative stress response.</title>
        <authorList>
            <person name="Lu L.D."/>
            <person name="Sun Q."/>
            <person name="Fan X.Y."/>
            <person name="Zhong Y."/>
            <person name="Yao Y.F."/>
            <person name="Zhao G.P."/>
        </authorList>
    </citation>
    <scope>FUNCTION AS PYROPHOSPHOHYDROLASE</scope>
    <scope>CATALYTIC ACTIVITY</scope>
    <scope>BIOPHYSICOCHEMICAL PROPERTIES</scope>
    <scope>MUTAGENESIS OF ALA-219</scope>
    <scope>INDUCTION</scope>
    <scope>SUBUNIT</scope>
    <source>
        <strain>ATCC 25618 / H37Rv</strain>
    </source>
</reference>
<reference key="3">
    <citation type="journal article" date="2011" name="Mol. Cell. Proteomics">
        <title>Proteogenomic analysis of Mycobacterium tuberculosis by high resolution mass spectrometry.</title>
        <authorList>
            <person name="Kelkar D.S."/>
            <person name="Kumar D."/>
            <person name="Kumar P."/>
            <person name="Balakrishnan L."/>
            <person name="Muthusamy B."/>
            <person name="Yadav A.K."/>
            <person name="Shrivastava P."/>
            <person name="Marimuthu A."/>
            <person name="Anand S."/>
            <person name="Sundaram H."/>
            <person name="Kingsbury R."/>
            <person name="Harsha H.C."/>
            <person name="Nair B."/>
            <person name="Prasad T.S."/>
            <person name="Chauhan D.S."/>
            <person name="Katoch K."/>
            <person name="Katoch V.M."/>
            <person name="Kumar P."/>
            <person name="Chaerkady R."/>
            <person name="Ramachandran S."/>
            <person name="Dash D."/>
            <person name="Pandey A."/>
        </authorList>
    </citation>
    <scope>IDENTIFICATION BY MASS SPECTROMETRY [LARGE SCALE ANALYSIS]</scope>
    <source>
        <strain>ATCC 25618 / H37Rv</strain>
    </source>
</reference>
<protein>
    <recommendedName>
        <fullName>Nucleoside triphosphate pyrophosphohydrolase</fullName>
        <shortName>NTP-PPase</shortName>
        <ecNumber>3.6.1.8</ecNumber>
    </recommendedName>
</protein>